<dbReference type="EC" id="6.1.1.1" evidence="1"/>
<dbReference type="EMBL" id="CR628337">
    <property type="protein sequence ID" value="CAH14844.1"/>
    <property type="molecule type" value="Genomic_DNA"/>
</dbReference>
<dbReference type="RefSeq" id="WP_011214798.1">
    <property type="nucleotide sequence ID" value="NC_006369.1"/>
</dbReference>
<dbReference type="SMR" id="Q5WYX4"/>
<dbReference type="KEGG" id="lpf:lpl0611"/>
<dbReference type="LegioList" id="lpl0611"/>
<dbReference type="HOGENOM" id="CLU_024003_5_0_6"/>
<dbReference type="Proteomes" id="UP000002517">
    <property type="component" value="Chromosome"/>
</dbReference>
<dbReference type="GO" id="GO:0005829">
    <property type="term" value="C:cytosol"/>
    <property type="evidence" value="ECO:0007669"/>
    <property type="project" value="TreeGrafter"/>
</dbReference>
<dbReference type="GO" id="GO:0005524">
    <property type="term" value="F:ATP binding"/>
    <property type="evidence" value="ECO:0007669"/>
    <property type="project" value="UniProtKB-UniRule"/>
</dbReference>
<dbReference type="GO" id="GO:0003723">
    <property type="term" value="F:RNA binding"/>
    <property type="evidence" value="ECO:0007669"/>
    <property type="project" value="UniProtKB-KW"/>
</dbReference>
<dbReference type="GO" id="GO:0004831">
    <property type="term" value="F:tyrosine-tRNA ligase activity"/>
    <property type="evidence" value="ECO:0007669"/>
    <property type="project" value="UniProtKB-UniRule"/>
</dbReference>
<dbReference type="GO" id="GO:0006437">
    <property type="term" value="P:tyrosyl-tRNA aminoacylation"/>
    <property type="evidence" value="ECO:0007669"/>
    <property type="project" value="UniProtKB-UniRule"/>
</dbReference>
<dbReference type="CDD" id="cd00165">
    <property type="entry name" value="S4"/>
    <property type="match status" value="1"/>
</dbReference>
<dbReference type="CDD" id="cd00805">
    <property type="entry name" value="TyrRS_core"/>
    <property type="match status" value="1"/>
</dbReference>
<dbReference type="FunFam" id="1.10.240.10:FF:000006">
    <property type="entry name" value="Tyrosine--tRNA ligase"/>
    <property type="match status" value="1"/>
</dbReference>
<dbReference type="FunFam" id="3.40.50.620:FF:000061">
    <property type="entry name" value="Tyrosine--tRNA ligase"/>
    <property type="match status" value="1"/>
</dbReference>
<dbReference type="Gene3D" id="3.40.50.620">
    <property type="entry name" value="HUPs"/>
    <property type="match status" value="1"/>
</dbReference>
<dbReference type="Gene3D" id="3.10.290.10">
    <property type="entry name" value="RNA-binding S4 domain"/>
    <property type="match status" value="1"/>
</dbReference>
<dbReference type="Gene3D" id="1.10.240.10">
    <property type="entry name" value="Tyrosyl-Transfer RNA Synthetase"/>
    <property type="match status" value="1"/>
</dbReference>
<dbReference type="HAMAP" id="MF_02007">
    <property type="entry name" value="Tyr_tRNA_synth_type2"/>
    <property type="match status" value="1"/>
</dbReference>
<dbReference type="InterPro" id="IPR001412">
    <property type="entry name" value="aa-tRNA-synth_I_CS"/>
</dbReference>
<dbReference type="InterPro" id="IPR002305">
    <property type="entry name" value="aa-tRNA-synth_Ic"/>
</dbReference>
<dbReference type="InterPro" id="IPR014729">
    <property type="entry name" value="Rossmann-like_a/b/a_fold"/>
</dbReference>
<dbReference type="InterPro" id="IPR002942">
    <property type="entry name" value="S4_RNA-bd"/>
</dbReference>
<dbReference type="InterPro" id="IPR036986">
    <property type="entry name" value="S4_RNA-bd_sf"/>
</dbReference>
<dbReference type="InterPro" id="IPR002307">
    <property type="entry name" value="Tyr-tRNA-ligase"/>
</dbReference>
<dbReference type="InterPro" id="IPR024088">
    <property type="entry name" value="Tyr-tRNA-ligase_bac-type"/>
</dbReference>
<dbReference type="InterPro" id="IPR024108">
    <property type="entry name" value="Tyr-tRNA-ligase_bac_2"/>
</dbReference>
<dbReference type="NCBIfam" id="TIGR00234">
    <property type="entry name" value="tyrS"/>
    <property type="match status" value="1"/>
</dbReference>
<dbReference type="PANTHER" id="PTHR11766:SF1">
    <property type="entry name" value="TYROSINE--TRNA LIGASE"/>
    <property type="match status" value="1"/>
</dbReference>
<dbReference type="PANTHER" id="PTHR11766">
    <property type="entry name" value="TYROSYL-TRNA SYNTHETASE"/>
    <property type="match status" value="1"/>
</dbReference>
<dbReference type="Pfam" id="PF00579">
    <property type="entry name" value="tRNA-synt_1b"/>
    <property type="match status" value="1"/>
</dbReference>
<dbReference type="PRINTS" id="PR01040">
    <property type="entry name" value="TRNASYNTHTYR"/>
</dbReference>
<dbReference type="SMART" id="SM00363">
    <property type="entry name" value="S4"/>
    <property type="match status" value="1"/>
</dbReference>
<dbReference type="SUPFAM" id="SSF55174">
    <property type="entry name" value="Alpha-L RNA-binding motif"/>
    <property type="match status" value="1"/>
</dbReference>
<dbReference type="SUPFAM" id="SSF52374">
    <property type="entry name" value="Nucleotidylyl transferase"/>
    <property type="match status" value="1"/>
</dbReference>
<dbReference type="PROSITE" id="PS00178">
    <property type="entry name" value="AA_TRNA_LIGASE_I"/>
    <property type="match status" value="1"/>
</dbReference>
<dbReference type="PROSITE" id="PS50889">
    <property type="entry name" value="S4"/>
    <property type="match status" value="1"/>
</dbReference>
<proteinExistence type="inferred from homology"/>
<keyword id="KW-0030">Aminoacyl-tRNA synthetase</keyword>
<keyword id="KW-0067">ATP-binding</keyword>
<keyword id="KW-0963">Cytoplasm</keyword>
<keyword id="KW-0436">Ligase</keyword>
<keyword id="KW-0547">Nucleotide-binding</keyword>
<keyword id="KW-0648">Protein biosynthesis</keyword>
<keyword id="KW-0694">RNA-binding</keyword>
<evidence type="ECO:0000255" key="1">
    <source>
        <dbReference type="HAMAP-Rule" id="MF_02007"/>
    </source>
</evidence>
<gene>
    <name evidence="1" type="primary">tyrS</name>
    <name type="ordered locus">lpl0611</name>
</gene>
<accession>Q5WYX4</accession>
<comment type="function">
    <text evidence="1">Catalyzes the attachment of tyrosine to tRNA(Tyr) in a two-step reaction: tyrosine is first activated by ATP to form Tyr-AMP and then transferred to the acceptor end of tRNA(Tyr).</text>
</comment>
<comment type="catalytic activity">
    <reaction evidence="1">
        <text>tRNA(Tyr) + L-tyrosine + ATP = L-tyrosyl-tRNA(Tyr) + AMP + diphosphate + H(+)</text>
        <dbReference type="Rhea" id="RHEA:10220"/>
        <dbReference type="Rhea" id="RHEA-COMP:9706"/>
        <dbReference type="Rhea" id="RHEA-COMP:9707"/>
        <dbReference type="ChEBI" id="CHEBI:15378"/>
        <dbReference type="ChEBI" id="CHEBI:30616"/>
        <dbReference type="ChEBI" id="CHEBI:33019"/>
        <dbReference type="ChEBI" id="CHEBI:58315"/>
        <dbReference type="ChEBI" id="CHEBI:78442"/>
        <dbReference type="ChEBI" id="CHEBI:78536"/>
        <dbReference type="ChEBI" id="CHEBI:456215"/>
        <dbReference type="EC" id="6.1.1.1"/>
    </reaction>
</comment>
<comment type="subunit">
    <text evidence="1">Homodimer.</text>
</comment>
<comment type="subcellular location">
    <subcellularLocation>
        <location evidence="1">Cytoplasm</location>
    </subcellularLocation>
</comment>
<comment type="similarity">
    <text evidence="1">Belongs to the class-I aminoacyl-tRNA synthetase family. TyrS type 2 subfamily.</text>
</comment>
<protein>
    <recommendedName>
        <fullName evidence="1">Tyrosine--tRNA ligase</fullName>
        <ecNumber evidence="1">6.1.1.1</ecNumber>
    </recommendedName>
    <alternativeName>
        <fullName evidence="1">Tyrosyl-tRNA synthetase</fullName>
        <shortName evidence="1">TyrRS</shortName>
    </alternativeName>
</protein>
<reference key="1">
    <citation type="journal article" date="2004" name="Nat. Genet.">
        <title>Evidence in the Legionella pneumophila genome for exploitation of host cell functions and high genome plasticity.</title>
        <authorList>
            <person name="Cazalet C."/>
            <person name="Rusniok C."/>
            <person name="Brueggemann H."/>
            <person name="Zidane N."/>
            <person name="Magnier A."/>
            <person name="Ma L."/>
            <person name="Tichit M."/>
            <person name="Jarraud S."/>
            <person name="Bouchier C."/>
            <person name="Vandenesch F."/>
            <person name="Kunst F."/>
            <person name="Etienne J."/>
            <person name="Glaser P."/>
            <person name="Buchrieser C."/>
        </authorList>
    </citation>
    <scope>NUCLEOTIDE SEQUENCE [LARGE SCALE GENOMIC DNA]</scope>
    <source>
        <strain>Lens</strain>
    </source>
</reference>
<organism>
    <name type="scientific">Legionella pneumophila (strain Lens)</name>
    <dbReference type="NCBI Taxonomy" id="297245"/>
    <lineage>
        <taxon>Bacteria</taxon>
        <taxon>Pseudomonadati</taxon>
        <taxon>Pseudomonadota</taxon>
        <taxon>Gammaproteobacteria</taxon>
        <taxon>Legionellales</taxon>
        <taxon>Legionellaceae</taxon>
        <taxon>Legionella</taxon>
    </lineage>
</organism>
<name>SYY_LEGPL</name>
<feature type="chain" id="PRO_0000236728" description="Tyrosine--tRNA ligase">
    <location>
        <begin position="1"/>
        <end position="401"/>
    </location>
</feature>
<feature type="domain" description="S4 RNA-binding" evidence="1">
    <location>
        <begin position="336"/>
        <end position="397"/>
    </location>
</feature>
<feature type="short sequence motif" description="'HIGH' region">
    <location>
        <begin position="42"/>
        <end position="51"/>
    </location>
</feature>
<feature type="short sequence motif" description="'KMSKS' region">
    <location>
        <begin position="226"/>
        <end position="230"/>
    </location>
</feature>
<feature type="binding site" evidence="1">
    <location>
        <position position="229"/>
    </location>
    <ligand>
        <name>ATP</name>
        <dbReference type="ChEBI" id="CHEBI:30616"/>
    </ligand>
</feature>
<sequence length="401" mass="45352">MIVQDSVCSELMRGCEEILPVPELEKKLQKGIPLKIKAGFDPTAPDLHLGHTVLLNKLRQFQQFGHEVIFLIGDFTAMIGDPTGKNVTRMPLSQETVLENAKTYQHQVFKILDPDKTTVAFNSQWLNKFNAVDLIRLAATHTVARMLERDDFNKRYTTGQPIAIHEFLYPLLQGYDSVALKADVELGGTDQKFNLLMGRELQKHYGFEPQVVMMTPLIEGLDGVKKMSKSLDNYIGINETSEQMFGKIMSVSDELMWRYIDLLSFKTGKEIQQLKQSVLEGKNPRDVKIDFAKEIVARFHDQTQAEFAHNKFIERFQKGNIPEDLEELSLVIAEPIALAQLLKQIDLTASTSESIRMVKQGAVKVDGDKISDPSLKLPIGKSYIIQVGKRRIAKLSIQQAH</sequence>